<sequence length="550" mass="61805">QKLPGNDNSTATPCLGHHAVPNGTLVETITNDQIEVTNATELVQSSSTGRICDSPHRILDGKNCTLIDALLGDPHCDGFQNEKWDLFIERSKAFSNCYPYDVPDYASLRSLVASSGTLEFINEGFNWTGVTQSGGSYACKRGSVNSFFSRLNWLYESEYKYPALNVTMPNNGKFDKLYIWGVHHPSTEKEQTNLYVRASGRVTVSTKRSQQTVIPNIGSRPWVRGLSSRISIYWTIVKPGDILLINSTGNLIAPRGYFKIRTGKSSIMRSDAPIGTCSSECITPNGSIPNDKPFQNVNKITYGACPRYVKQNTLKLATGMRNVPEKQTRGIFGAIAGFIENGWEGMVDGWYGFRHQNSEGTGQAADLKSTQAAIDQINGKLNRLIEKTNEKFHQIEKEFSEVEGRIQDLEKYVEDTKIDLWSYNAELLVALENQHTIDLTDSEMNKLFEKTRKQLRENAEDMGNGCFKIYHKCDNACIGSIRNGTYDHDVYRDEALNNRFQIKGVELKSGYKDWILWISFAISCFLLCVVLLGFIMWACQKGNIRCNICI</sequence>
<keyword id="KW-0002">3D-structure</keyword>
<keyword id="KW-1167">Clathrin- and caveolin-independent endocytosis of virus by host</keyword>
<keyword id="KW-1165">Clathrin-mediated endocytosis of virus by host</keyword>
<keyword id="KW-1015">Disulfide bond</keyword>
<keyword id="KW-1170">Fusion of virus membrane with host endosomal membrane</keyword>
<keyword id="KW-1168">Fusion of virus membrane with host membrane</keyword>
<keyword id="KW-0325">Glycoprotein</keyword>
<keyword id="KW-0348">Hemagglutinin</keyword>
<keyword id="KW-1032">Host cell membrane</keyword>
<keyword id="KW-1043">Host membrane</keyword>
<keyword id="KW-0945">Host-virus interaction</keyword>
<keyword id="KW-0449">Lipoprotein</keyword>
<keyword id="KW-0472">Membrane</keyword>
<keyword id="KW-0564">Palmitate</keyword>
<keyword id="KW-0812">Transmembrane</keyword>
<keyword id="KW-1133">Transmembrane helix</keyword>
<keyword id="KW-1161">Viral attachment to host cell</keyword>
<keyword id="KW-0261">Viral envelope protein</keyword>
<keyword id="KW-1162">Viral penetration into host cytoplasm</keyword>
<keyword id="KW-0946">Virion</keyword>
<keyword id="KW-1164">Virus endocytosis by host</keyword>
<keyword id="KW-1160">Virus entry into host cell</keyword>
<accession>P12589</accession>
<evidence type="ECO:0000255" key="1">
    <source>
        <dbReference type="HAMAP-Rule" id="MF_04072"/>
    </source>
</evidence>
<dbReference type="EMBL" id="M21648">
    <property type="protein sequence ID" value="AAA43275.1"/>
    <property type="molecule type" value="Genomic_RNA"/>
</dbReference>
<dbReference type="PDB" id="7U8J">
    <property type="method" value="X-ray"/>
    <property type="resolution" value="4.90 A"/>
    <property type="chains" value="B=330-508"/>
</dbReference>
<dbReference type="PDB" id="7U8L">
    <property type="method" value="X-ray"/>
    <property type="resolution" value="4.56 A"/>
    <property type="chains" value="B=330-505"/>
</dbReference>
<dbReference type="PDB" id="7U8M">
    <property type="method" value="X-ray"/>
    <property type="resolution" value="5.39 A"/>
    <property type="chains" value="B/D/I=330-505"/>
</dbReference>
<dbReference type="PDBsum" id="7U8J"/>
<dbReference type="PDBsum" id="7U8L"/>
<dbReference type="PDBsum" id="7U8M"/>
<dbReference type="SMR" id="P12589"/>
<dbReference type="GlyCosmos" id="P12589">
    <property type="glycosylation" value="7 sites, No reported glycans"/>
</dbReference>
<dbReference type="GO" id="GO:0020002">
    <property type="term" value="C:host cell plasma membrane"/>
    <property type="evidence" value="ECO:0007669"/>
    <property type="project" value="UniProtKB-SubCell"/>
</dbReference>
<dbReference type="GO" id="GO:0016020">
    <property type="term" value="C:membrane"/>
    <property type="evidence" value="ECO:0007669"/>
    <property type="project" value="UniProtKB-UniRule"/>
</dbReference>
<dbReference type="GO" id="GO:0019031">
    <property type="term" value="C:viral envelope"/>
    <property type="evidence" value="ECO:0007669"/>
    <property type="project" value="UniProtKB-UniRule"/>
</dbReference>
<dbReference type="GO" id="GO:0055036">
    <property type="term" value="C:virion membrane"/>
    <property type="evidence" value="ECO:0007669"/>
    <property type="project" value="UniProtKB-SubCell"/>
</dbReference>
<dbReference type="GO" id="GO:0046789">
    <property type="term" value="F:host cell surface receptor binding"/>
    <property type="evidence" value="ECO:0007669"/>
    <property type="project" value="UniProtKB-UniRule"/>
</dbReference>
<dbReference type="GO" id="GO:0075512">
    <property type="term" value="P:clathrin-dependent endocytosis of virus by host cell"/>
    <property type="evidence" value="ECO:0007669"/>
    <property type="project" value="UniProtKB-UniRule"/>
</dbReference>
<dbReference type="GO" id="GO:0039654">
    <property type="term" value="P:fusion of virus membrane with host endosome membrane"/>
    <property type="evidence" value="ECO:0007669"/>
    <property type="project" value="UniProtKB-UniRule"/>
</dbReference>
<dbReference type="GO" id="GO:0019064">
    <property type="term" value="P:fusion of virus membrane with host plasma membrane"/>
    <property type="evidence" value="ECO:0007669"/>
    <property type="project" value="InterPro"/>
</dbReference>
<dbReference type="GO" id="GO:0046761">
    <property type="term" value="P:viral budding from plasma membrane"/>
    <property type="evidence" value="ECO:0007669"/>
    <property type="project" value="UniProtKB-UniRule"/>
</dbReference>
<dbReference type="GO" id="GO:0019062">
    <property type="term" value="P:virion attachment to host cell"/>
    <property type="evidence" value="ECO:0007669"/>
    <property type="project" value="UniProtKB-KW"/>
</dbReference>
<dbReference type="FunFam" id="3.90.20.10:FF:000001">
    <property type="entry name" value="Hemagglutinin"/>
    <property type="match status" value="1"/>
</dbReference>
<dbReference type="FunFam" id="3.90.209.20:FF:000001">
    <property type="entry name" value="Hemagglutinin"/>
    <property type="match status" value="1"/>
</dbReference>
<dbReference type="Gene3D" id="3.90.20.10">
    <property type="match status" value="1"/>
</dbReference>
<dbReference type="Gene3D" id="3.90.209.20">
    <property type="match status" value="1"/>
</dbReference>
<dbReference type="HAMAP" id="MF_04072">
    <property type="entry name" value="INFV_HEMA"/>
    <property type="match status" value="1"/>
</dbReference>
<dbReference type="InterPro" id="IPR008980">
    <property type="entry name" value="Capsid_hemagglutn"/>
</dbReference>
<dbReference type="InterPro" id="IPR013828">
    <property type="entry name" value="Hemagglutn_HA1_a/b_dom_sf"/>
</dbReference>
<dbReference type="InterPro" id="IPR000149">
    <property type="entry name" value="Hemagglutn_influenz_A"/>
</dbReference>
<dbReference type="InterPro" id="IPR001364">
    <property type="entry name" value="Hemagglutn_influenz_A/B"/>
</dbReference>
<dbReference type="Pfam" id="PF00509">
    <property type="entry name" value="Hemagglutinin"/>
    <property type="match status" value="1"/>
</dbReference>
<dbReference type="PRINTS" id="PR00330">
    <property type="entry name" value="HEMAGGLUTN1"/>
</dbReference>
<dbReference type="PRINTS" id="PR00329">
    <property type="entry name" value="HEMAGGLUTN12"/>
</dbReference>
<dbReference type="SUPFAM" id="SSF58064">
    <property type="entry name" value="Influenza hemagglutinin (stalk)"/>
    <property type="match status" value="1"/>
</dbReference>
<dbReference type="SUPFAM" id="SSF49818">
    <property type="entry name" value="Viral protein domain"/>
    <property type="match status" value="1"/>
</dbReference>
<name>HEMA_I86A1</name>
<protein>
    <recommendedName>
        <fullName evidence="1">Hemagglutinin</fullName>
    </recommendedName>
    <component>
        <recommendedName>
            <fullName evidence="1">Hemagglutinin HA1 chain</fullName>
        </recommendedName>
    </component>
    <component>
        <recommendedName>
            <fullName evidence="1">Hemagglutinin HA2 chain</fullName>
        </recommendedName>
    </component>
</protein>
<proteinExistence type="evidence at protein level"/>
<comment type="function">
    <text evidence="1">Binds to sialic acid-containing receptors on the cell surface, bringing about the attachment of the virus particle to the cell. This attachment induces virion internalization either through clathrin-dependent endocytosis or through clathrin- and caveolin-independent pathway. Plays a major role in the determination of host range restriction and virulence. Class I viral fusion protein. Responsible for penetration of the virus into the cell cytoplasm by mediating the fusion of the membrane of the endocytosed virus particle with the endosomal membrane. Low pH in endosomes induces an irreversible conformational change in HA2, releasing the fusion hydrophobic peptide. Several trimers are required to form a competent fusion pore.</text>
</comment>
<comment type="subunit">
    <text evidence="1">Homotrimer of disulfide-linked HA1-HA2.</text>
</comment>
<comment type="subcellular location">
    <subcellularLocation>
        <location evidence="1">Virion membrane</location>
        <topology evidence="1">Single-pass type I membrane protein</topology>
    </subcellularLocation>
    <subcellularLocation>
        <location evidence="1">Host apical cell membrane</location>
        <topology evidence="1">Single-pass type I membrane protein</topology>
    </subcellularLocation>
    <text evidence="1">Targeted to the apical plasma membrane in epithelial polarized cells through a signal present in the transmembrane domain. Associated with glycosphingolipid- and cholesterol-enriched detergent-resistant lipid rafts.</text>
</comment>
<comment type="PTM">
    <text evidence="1">Palmitoylated.</text>
</comment>
<comment type="PTM">
    <text evidence="1">In natural infection, inactive HA is matured into HA1 and HA2 outside the cell by one or more trypsin-like, arginine-specific endoprotease secreted by the bronchial epithelial cells. One identified protease that may be involved in this process is secreted in lungs by club cells.</text>
</comment>
<comment type="similarity">
    <text evidence="1">Belongs to the influenza viruses hemagglutinin family.</text>
</comment>
<feature type="chain" id="PRO_0000440852" description="Hemagglutinin HA1 chain" evidence="1">
    <location>
        <begin position="1"/>
        <end position="329"/>
    </location>
</feature>
<feature type="chain" id="PRO_0000440853" description="Hemagglutinin HA2 chain" evidence="1">
    <location>
        <begin position="330"/>
        <end position="550"/>
    </location>
</feature>
<feature type="topological domain" description="Extracellular" evidence="1">
    <location>
        <begin position="1"/>
        <end position="514"/>
    </location>
</feature>
<feature type="transmembrane region" description="Helical" evidence="1">
    <location>
        <begin position="515"/>
        <end position="535"/>
    </location>
</feature>
<feature type="topological domain" description="Cytoplasmic" evidence="1">
    <location>
        <begin position="536"/>
        <end position="550"/>
    </location>
</feature>
<feature type="site" description="Cleavage; by host" evidence="1">
    <location>
        <begin position="329"/>
        <end position="330"/>
    </location>
</feature>
<feature type="lipid moiety-binding region" description="S-palmitoyl cysteine; by host" evidence="1">
    <location>
        <position position="539"/>
    </location>
</feature>
<feature type="lipid moiety-binding region" description="S-palmitoyl cysteine; by host" evidence="1">
    <location>
        <position position="546"/>
    </location>
</feature>
<feature type="lipid moiety-binding region" description="S-palmitoyl cysteine; by host" evidence="1">
    <location>
        <position position="549"/>
    </location>
</feature>
<feature type="glycosylation site" description="N-linked (GlcNAc...) asparagine; by host" evidence="1">
    <location>
        <position position="8"/>
    </location>
</feature>
<feature type="glycosylation site" description="N-linked (GlcNAc...) asparagine; by host" evidence="1">
    <location>
        <position position="22"/>
    </location>
</feature>
<feature type="glycosylation site" description="N-linked (GlcNAc...) asparagine; by host" evidence="1">
    <location>
        <position position="38"/>
    </location>
</feature>
<feature type="glycosylation site" description="N-linked (GlcNAc...) asparagine; by host" evidence="1">
    <location>
        <position position="63"/>
    </location>
</feature>
<feature type="glycosylation site" description="N-linked (GlcNAc...) asparagine; by host" evidence="1">
    <location>
        <position position="126"/>
    </location>
</feature>
<feature type="glycosylation site" description="N-linked (GlcNAc...) asparagine; by host" evidence="1">
    <location>
        <position position="165"/>
    </location>
</feature>
<feature type="glycosylation site" description="N-linked (GlcNAc...) asparagine; by host" evidence="1">
    <location>
        <position position="483"/>
    </location>
</feature>
<feature type="disulfide bond" description="Interchain (between HA1 and HA2 chains)" evidence="1">
    <location>
        <begin position="14"/>
        <end position="466"/>
    </location>
</feature>
<feature type="disulfide bond" evidence="1">
    <location>
        <begin position="52"/>
        <end position="277"/>
    </location>
</feature>
<feature type="disulfide bond" evidence="1">
    <location>
        <begin position="64"/>
        <end position="76"/>
    </location>
</feature>
<feature type="disulfide bond" evidence="1">
    <location>
        <begin position="97"/>
        <end position="139"/>
    </location>
</feature>
<feature type="disulfide bond" evidence="1">
    <location>
        <begin position="281"/>
        <end position="305"/>
    </location>
</feature>
<feature type="disulfide bond" evidence="1">
    <location>
        <begin position="473"/>
        <end position="477"/>
    </location>
</feature>
<organism>
    <name type="scientific">Influenza A virus (strain A/Memphis/6/1986 H3N2)</name>
    <dbReference type="NCBI Taxonomy" id="383571"/>
    <lineage>
        <taxon>Viruses</taxon>
        <taxon>Riboviria</taxon>
        <taxon>Orthornavirae</taxon>
        <taxon>Negarnaviricota</taxon>
        <taxon>Polyploviricotina</taxon>
        <taxon>Insthoviricetes</taxon>
        <taxon>Articulavirales</taxon>
        <taxon>Orthomyxoviridae</taxon>
        <taxon>Alphainfluenzavirus</taxon>
        <taxon>Alphainfluenzavirus influenzae</taxon>
        <taxon>Influenza A virus</taxon>
    </lineage>
</organism>
<gene>
    <name evidence="1" type="primary">HA</name>
</gene>
<reference key="1">
    <citation type="journal article" date="1988" name="Virology">
        <title>Antigenic and structural characterization of multiple subpopulations of H3N2 influenza virus from an individual.</title>
        <authorList>
            <person name="Katz J.M."/>
            <person name="Webster R.G."/>
        </authorList>
    </citation>
    <scope>NUCLEOTIDE SEQUENCE [GENOMIC RNA]</scope>
</reference>
<organismHost>
    <name type="scientific">Aves</name>
    <dbReference type="NCBI Taxonomy" id="8782"/>
</organismHost>
<organismHost>
    <name type="scientific">Cetacea</name>
    <name type="common">whales</name>
    <dbReference type="NCBI Taxonomy" id="9721"/>
</organismHost>
<organismHost>
    <name type="scientific">Homo sapiens</name>
    <name type="common">Human</name>
    <dbReference type="NCBI Taxonomy" id="9606"/>
</organismHost>
<organismHost>
    <name type="scientific">Phocidae</name>
    <name type="common">true seals</name>
    <dbReference type="NCBI Taxonomy" id="9709"/>
</organismHost>
<organismHost>
    <name type="scientific">Sus scrofa</name>
    <name type="common">Pig</name>
    <dbReference type="NCBI Taxonomy" id="9823"/>
</organismHost>